<gene>
    <name evidence="3" type="primary">B3GAT1</name>
</gene>
<protein>
    <recommendedName>
        <fullName evidence="3">Galactosylgalactosylxylosylprotein 3-beta-glucuronosyltransferase 1</fullName>
        <ecNumber evidence="2">2.4.1.135</ecNumber>
    </recommendedName>
    <alternativeName>
        <fullName>Beta-1,3-glucuronyltransferase 1</fullName>
    </alternativeName>
    <alternativeName>
        <fullName>Glucuronosyltransferase P</fullName>
        <shortName evidence="2">GlcAT-P</shortName>
    </alternativeName>
    <alternativeName>
        <fullName>UDP-GlcUA:glycoprotein beta-1,3-glucuronyltransferase</fullName>
        <shortName>GlcUAT-P</shortName>
    </alternativeName>
</protein>
<name>B3GA1_CANLF</name>
<feature type="chain" id="PRO_0000195166" description="Galactosylgalactosylxylosylprotein 3-beta-glucuronosyltransferase 1">
    <location>
        <begin position="1"/>
        <end position="335"/>
    </location>
</feature>
<feature type="topological domain" description="Cytoplasmic" evidence="4">
    <location>
        <begin position="1"/>
        <end position="6"/>
    </location>
</feature>
<feature type="transmembrane region" description="Helical; Signal-anchor for type II membrane protein" evidence="4">
    <location>
        <begin position="7"/>
        <end position="27"/>
    </location>
</feature>
<feature type="topological domain" description="Lumenal" evidence="4">
    <location>
        <begin position="28"/>
        <end position="335"/>
    </location>
</feature>
<feature type="region of interest" description="Essential for transport from endoplasmic reticulum to Golgi apparatus and interaction with SAR1A" evidence="2">
    <location>
        <begin position="3"/>
        <end position="5"/>
    </location>
</feature>
<feature type="region of interest" description="Interaction with galactose moiety of substrate glycoprotein" evidence="1">
    <location>
        <begin position="246"/>
        <end position="255"/>
    </location>
</feature>
<feature type="active site" description="Proton donor/acceptor" evidence="1">
    <location>
        <position position="285"/>
    </location>
</feature>
<feature type="binding site" evidence="1">
    <location>
        <begin position="92"/>
        <end position="94"/>
    </location>
    <ligand>
        <name>UDP-alpha-D-glucuronate</name>
        <dbReference type="ChEBI" id="CHEBI:58052"/>
    </ligand>
</feature>
<feature type="binding site" evidence="1">
    <location>
        <position position="123"/>
    </location>
    <ligand>
        <name>UDP-alpha-D-glucuronate</name>
        <dbReference type="ChEBI" id="CHEBI:58052"/>
    </ligand>
</feature>
<feature type="binding site" evidence="1">
    <location>
        <position position="166"/>
    </location>
    <ligand>
        <name>UDP-alpha-D-glucuronate</name>
        <dbReference type="ChEBI" id="CHEBI:58052"/>
    </ligand>
</feature>
<feature type="binding site" evidence="1">
    <location>
        <position position="171"/>
    </location>
    <ligand>
        <name>UDP-alpha-D-glucuronate</name>
        <dbReference type="ChEBI" id="CHEBI:58052"/>
    </ligand>
</feature>
<feature type="binding site" evidence="1">
    <location>
        <begin position="196"/>
        <end position="198"/>
    </location>
    <ligand>
        <name>UDP-alpha-D-glucuronate</name>
        <dbReference type="ChEBI" id="CHEBI:58052"/>
    </ligand>
</feature>
<feature type="binding site" evidence="1">
    <location>
        <position position="198"/>
    </location>
    <ligand>
        <name>Mn(2+)</name>
        <dbReference type="ChEBI" id="CHEBI:29035"/>
    </ligand>
</feature>
<feature type="binding site" evidence="1">
    <location>
        <begin position="312"/>
        <end position="314"/>
    </location>
    <ligand>
        <name>UDP-alpha-D-glucuronate</name>
        <dbReference type="ChEBI" id="CHEBI:58052"/>
    </ligand>
</feature>
<feature type="site" description="Interaction with galactose moiety of substrate glycoprotein" evidence="1">
    <location>
        <position position="229"/>
    </location>
</feature>
<feature type="site" description="Interaction with galactose moiety of substrate glycoprotein" evidence="1">
    <location>
        <position position="322"/>
    </location>
</feature>
<feature type="modified residue" description="Phosphothreonine" evidence="2">
    <location>
        <position position="104"/>
    </location>
</feature>
<feature type="modified residue" description="Phosphothreonine" evidence="2">
    <location>
        <position position="109"/>
    </location>
</feature>
<feature type="glycosylation site" description="N-linked (GlcNAc...) asparagine" evidence="4">
    <location>
        <position position="141"/>
    </location>
</feature>
<feature type="glycosylation site" description="N-linked (GlcNAc...) asparagine" evidence="4">
    <location>
        <position position="185"/>
    </location>
</feature>
<feature type="glycosylation site" description="N-linked (GlcNAc...) asparagine" evidence="4">
    <location>
        <position position="304"/>
    </location>
</feature>
<sequence length="335" mass="38361">MPKRRDILAIVLIVLPWTLLVTVWHQSTIAPLLTTHKGEPLTDSRREAAPGADPREYCMSDRDIVEVVRTEYVYTRPPPWSDTLPTIHVVTPTYSRPVQKAELTRMANTLLHVPNLHWLVVEDAPRRTPLTARLLRDTGLNYTHLHVETPRNYKLRGDARDPRIPRGTMQRNLALRWLRETFPRNSSQPGVVYFADDDNTYSLELFEEMRSTRRVSVWPVAFVGGLRYEAPRVNGAGKVVGWKTVFDPHRPFAIDMAGFAVNLRLILQRSQAYFKLRGVKGGYQESSLLRELVTLNDLEPKAANCTKILVWHTRTEKPVLVNEGKKGFTDPTVEI</sequence>
<reference key="1">
    <citation type="submission" date="2005-03" db="EMBL/GenBank/DDBJ databases">
        <title>Phylogeny of beta3-glucuronyltransferases.</title>
        <authorList>
            <person name="Ouzzine M."/>
            <person name="Magdalou J."/>
            <person name="Fournel-Gigleux S."/>
            <person name="Mollicone R."/>
            <person name="Oriol R."/>
        </authorList>
    </citation>
    <scope>NUCLEOTIDE SEQUENCE [MRNA]</scope>
</reference>
<comment type="function">
    <text evidence="2">Involved in the biosynthesis of L2/HNK-1 carbohydrate epitope on glycoproteins. Can also play a role in glycosaminoglycan biosynthesis. Substrates include asialo-orosomucoid (ASOR), asialo-fetuin, and asialo-neural cell adhesion molecule. Requires sphingomyelin for activity: stearoyl-sphingomyelin was the most effective, followed by palmitoyl-sphingomyelin and lignoceroyl-sphingomyelin. Activity was demonstrated only for sphingomyelin with a saturated fatty acid and not for that with an unsaturated fatty acid, regardless of the length of the acyl group.</text>
</comment>
<comment type="catalytic activity">
    <reaction evidence="2">
        <text>3-O-(beta-D-galactosyl-(1-&gt;3)-beta-D-galactosyl-(1-&gt;4)-beta-D-xylosyl)-L-seryl-[protein] + UDP-alpha-D-glucuronate = 3-O-(beta-D-GlcA-(1-&gt;3)-beta-D-Gal-(1-&gt;3)-beta-D-Gal-(1-&gt;4)-beta-D-Xyl)-L-seryl-[protein] + UDP + H(+)</text>
        <dbReference type="Rhea" id="RHEA:24168"/>
        <dbReference type="Rhea" id="RHEA-COMP:12571"/>
        <dbReference type="Rhea" id="RHEA-COMP:12573"/>
        <dbReference type="ChEBI" id="CHEBI:15378"/>
        <dbReference type="ChEBI" id="CHEBI:58052"/>
        <dbReference type="ChEBI" id="CHEBI:58223"/>
        <dbReference type="ChEBI" id="CHEBI:132090"/>
        <dbReference type="ChEBI" id="CHEBI:132093"/>
        <dbReference type="EC" id="2.4.1.135"/>
    </reaction>
</comment>
<comment type="cofactor">
    <cofactor evidence="2">
        <name>Mn(2+)</name>
        <dbReference type="ChEBI" id="CHEBI:29035"/>
    </cofactor>
</comment>
<comment type="pathway">
    <text>Protein modification; protein glycosylation.</text>
</comment>
<comment type="subunit">
    <text evidence="2">Homodimer. Interacts with SAR1A.</text>
</comment>
<comment type="subcellular location">
    <subcellularLocation>
        <location evidence="2">Golgi apparatus membrane</location>
        <topology evidence="2">Single-pass type II membrane protein</topology>
    </subcellularLocation>
    <subcellularLocation>
        <location evidence="2">Secreted</location>
    </subcellularLocation>
</comment>
<comment type="PTM">
    <text evidence="2">The soluble form derives from the membrane form by proteolytic processing.</text>
</comment>
<comment type="similarity">
    <text evidence="5">Belongs to the glycosyltransferase 43 family.</text>
</comment>
<proteinExistence type="evidence at transcript level"/>
<dbReference type="EC" id="2.4.1.135" evidence="2"/>
<dbReference type="EMBL" id="AJ888975">
    <property type="protein sequence ID" value="CAI62040.1"/>
    <property type="molecule type" value="mRNA"/>
</dbReference>
<dbReference type="RefSeq" id="NP_001026804.1">
    <property type="nucleotide sequence ID" value="NM_001031634.1"/>
</dbReference>
<dbReference type="SMR" id="Q5CB03"/>
<dbReference type="FunCoup" id="Q5CB03">
    <property type="interactions" value="13"/>
</dbReference>
<dbReference type="STRING" id="9615.ENSCAFP00000031586"/>
<dbReference type="CAZy" id="GT43">
    <property type="family name" value="Glycosyltransferase Family 43"/>
</dbReference>
<dbReference type="GlyCosmos" id="Q5CB03">
    <property type="glycosylation" value="3 sites, No reported glycans"/>
</dbReference>
<dbReference type="PaxDb" id="9615-ENSCAFP00000031586"/>
<dbReference type="GeneID" id="489265"/>
<dbReference type="KEGG" id="cfa:489265"/>
<dbReference type="CTD" id="27087"/>
<dbReference type="InParanoid" id="Q5CB03"/>
<dbReference type="OrthoDB" id="675023at2759"/>
<dbReference type="UniPathway" id="UPA00378"/>
<dbReference type="Proteomes" id="UP000002254">
    <property type="component" value="Unplaced"/>
</dbReference>
<dbReference type="Proteomes" id="UP000694429">
    <property type="component" value="Unplaced"/>
</dbReference>
<dbReference type="Proteomes" id="UP000694542">
    <property type="component" value="Unplaced"/>
</dbReference>
<dbReference type="Proteomes" id="UP000805418">
    <property type="component" value="Unplaced"/>
</dbReference>
<dbReference type="GO" id="GO:0005789">
    <property type="term" value="C:endoplasmic reticulum membrane"/>
    <property type="evidence" value="ECO:0000250"/>
    <property type="project" value="UniProtKB"/>
</dbReference>
<dbReference type="GO" id="GO:0005576">
    <property type="term" value="C:extracellular region"/>
    <property type="evidence" value="ECO:0007669"/>
    <property type="project" value="UniProtKB-SubCell"/>
</dbReference>
<dbReference type="GO" id="GO:0000139">
    <property type="term" value="C:Golgi membrane"/>
    <property type="evidence" value="ECO:0000250"/>
    <property type="project" value="UniProtKB"/>
</dbReference>
<dbReference type="GO" id="GO:0015018">
    <property type="term" value="F:galactosylgalactosylxylosylprotein 3-beta-glucuronosyltransferase activity"/>
    <property type="evidence" value="ECO:0000250"/>
    <property type="project" value="UniProtKB"/>
</dbReference>
<dbReference type="GO" id="GO:0046872">
    <property type="term" value="F:metal ion binding"/>
    <property type="evidence" value="ECO:0007669"/>
    <property type="project" value="UniProtKB-KW"/>
</dbReference>
<dbReference type="GO" id="GO:0005975">
    <property type="term" value="P:carbohydrate metabolic process"/>
    <property type="evidence" value="ECO:0000318"/>
    <property type="project" value="GO_Central"/>
</dbReference>
<dbReference type="GO" id="GO:0050650">
    <property type="term" value="P:chondroitin sulfate proteoglycan biosynthetic process"/>
    <property type="evidence" value="ECO:0000318"/>
    <property type="project" value="GO_Central"/>
</dbReference>
<dbReference type="GO" id="GO:0006486">
    <property type="term" value="P:protein glycosylation"/>
    <property type="evidence" value="ECO:0007669"/>
    <property type="project" value="UniProtKB-UniPathway"/>
</dbReference>
<dbReference type="CDD" id="cd00218">
    <property type="entry name" value="GlcAT-I"/>
    <property type="match status" value="1"/>
</dbReference>
<dbReference type="FunFam" id="3.90.550.10:FF:000010">
    <property type="entry name" value="Galactosylgalactosylxylosylprotein 3-beta-glucuronosyltransferase"/>
    <property type="match status" value="1"/>
</dbReference>
<dbReference type="Gene3D" id="3.90.550.10">
    <property type="entry name" value="Spore Coat Polysaccharide Biosynthesis Protein SpsA, Chain A"/>
    <property type="match status" value="1"/>
</dbReference>
<dbReference type="InterPro" id="IPR005027">
    <property type="entry name" value="Glyco_trans_43"/>
</dbReference>
<dbReference type="InterPro" id="IPR029044">
    <property type="entry name" value="Nucleotide-diphossugar_trans"/>
</dbReference>
<dbReference type="PANTHER" id="PTHR10896:SF21">
    <property type="entry name" value="GALACTOSYLGALACTOSYLXYLOSYLPROTEIN 3-BETA-GLUCURONOSYLTRANSFERASE 1"/>
    <property type="match status" value="1"/>
</dbReference>
<dbReference type="PANTHER" id="PTHR10896">
    <property type="entry name" value="GALACTOSYLGALACTOSYLXYLOSYLPROTEIN 3-BETA-GLUCURONOSYLTRANSFERASE BETA-1,3-GLUCURONYLTRANSFERASE"/>
    <property type="match status" value="1"/>
</dbReference>
<dbReference type="Pfam" id="PF03360">
    <property type="entry name" value="Glyco_transf_43"/>
    <property type="match status" value="1"/>
</dbReference>
<dbReference type="SUPFAM" id="SSF53448">
    <property type="entry name" value="Nucleotide-diphospho-sugar transferases"/>
    <property type="match status" value="1"/>
</dbReference>
<organism>
    <name type="scientific">Canis lupus familiaris</name>
    <name type="common">Dog</name>
    <name type="synonym">Canis familiaris</name>
    <dbReference type="NCBI Taxonomy" id="9615"/>
    <lineage>
        <taxon>Eukaryota</taxon>
        <taxon>Metazoa</taxon>
        <taxon>Chordata</taxon>
        <taxon>Craniata</taxon>
        <taxon>Vertebrata</taxon>
        <taxon>Euteleostomi</taxon>
        <taxon>Mammalia</taxon>
        <taxon>Eutheria</taxon>
        <taxon>Laurasiatheria</taxon>
        <taxon>Carnivora</taxon>
        <taxon>Caniformia</taxon>
        <taxon>Canidae</taxon>
        <taxon>Canis</taxon>
    </lineage>
</organism>
<accession>Q5CB03</accession>
<keyword id="KW-0325">Glycoprotein</keyword>
<keyword id="KW-0333">Golgi apparatus</keyword>
<keyword id="KW-0464">Manganese</keyword>
<keyword id="KW-0472">Membrane</keyword>
<keyword id="KW-0479">Metal-binding</keyword>
<keyword id="KW-0597">Phosphoprotein</keyword>
<keyword id="KW-1185">Reference proteome</keyword>
<keyword id="KW-0964">Secreted</keyword>
<keyword id="KW-0735">Signal-anchor</keyword>
<keyword id="KW-0808">Transferase</keyword>
<keyword id="KW-0812">Transmembrane</keyword>
<keyword id="KW-1133">Transmembrane helix</keyword>
<evidence type="ECO:0000250" key="1"/>
<evidence type="ECO:0000250" key="2">
    <source>
        <dbReference type="UniProtKB" id="O35789"/>
    </source>
</evidence>
<evidence type="ECO:0000250" key="3">
    <source>
        <dbReference type="UniProtKB" id="Q9P2W7"/>
    </source>
</evidence>
<evidence type="ECO:0000255" key="4"/>
<evidence type="ECO:0000305" key="5"/>